<keyword id="KW-0963">Cytoplasm</keyword>
<keyword id="KW-0687">Ribonucleoprotein</keyword>
<keyword id="KW-0689">Ribosomal protein</keyword>
<sequence length="151" mass="17162">MGRMHAPGKGLSQSALPYRRSVPTWLKLTSDDVKEQIFKLAKKGLTPSQIGVILRDSHGVAQVRFVTGNKILRILKSKGLAPDLPEDLYHLIKKAVAVRKHLERNRKDKDAKFRLILIESRIHRLARYYKTKRVLAPNWKYXSSTASALVA</sequence>
<proteinExistence type="evidence at transcript level"/>
<evidence type="ECO:0000250" key="1"/>
<evidence type="ECO:0000250" key="2">
    <source>
        <dbReference type="UniProtKB" id="P62277"/>
    </source>
</evidence>
<evidence type="ECO:0000305" key="3"/>
<feature type="initiator methionine" description="Removed" evidence="1">
    <location>
        <position position="1"/>
    </location>
</feature>
<feature type="chain" id="PRO_0000115666" description="Small ribosomal subunit protein uS15">
    <location>
        <begin position="2"/>
        <end position="151"/>
    </location>
</feature>
<accession>Q9DFR6</accession>
<protein>
    <recommendedName>
        <fullName evidence="3">Small ribosomal subunit protein uS15</fullName>
    </recommendedName>
    <alternativeName>
        <fullName>40S ribosomal protein S13</fullName>
    </alternativeName>
</protein>
<dbReference type="EMBL" id="AF266166">
    <property type="protein sequence ID" value="AAG13286.1"/>
    <property type="molecule type" value="mRNA"/>
</dbReference>
<dbReference type="GO" id="GO:0022627">
    <property type="term" value="C:cytosolic small ribosomal subunit"/>
    <property type="evidence" value="ECO:0007669"/>
    <property type="project" value="TreeGrafter"/>
</dbReference>
<dbReference type="GO" id="GO:0005730">
    <property type="term" value="C:nucleolus"/>
    <property type="evidence" value="ECO:0007669"/>
    <property type="project" value="TreeGrafter"/>
</dbReference>
<dbReference type="GO" id="GO:0070181">
    <property type="term" value="F:small ribosomal subunit rRNA binding"/>
    <property type="evidence" value="ECO:0007669"/>
    <property type="project" value="TreeGrafter"/>
</dbReference>
<dbReference type="GO" id="GO:0003735">
    <property type="term" value="F:structural constituent of ribosome"/>
    <property type="evidence" value="ECO:0007669"/>
    <property type="project" value="InterPro"/>
</dbReference>
<dbReference type="GO" id="GO:0006412">
    <property type="term" value="P:translation"/>
    <property type="evidence" value="ECO:0007669"/>
    <property type="project" value="InterPro"/>
</dbReference>
<dbReference type="CDD" id="cd00353">
    <property type="entry name" value="Ribosomal_S15p_S13e"/>
    <property type="match status" value="1"/>
</dbReference>
<dbReference type="FunFam" id="1.10.287.10:FF:000003">
    <property type="entry name" value="40S ribosomal protein S13"/>
    <property type="match status" value="1"/>
</dbReference>
<dbReference type="FunFam" id="4.10.860.130:FF:000001">
    <property type="entry name" value="40S ribosomal protein S13"/>
    <property type="match status" value="1"/>
</dbReference>
<dbReference type="Gene3D" id="4.10.860.130">
    <property type="match status" value="1"/>
</dbReference>
<dbReference type="Gene3D" id="1.10.287.10">
    <property type="entry name" value="S15/NS1, RNA-binding"/>
    <property type="match status" value="1"/>
</dbReference>
<dbReference type="HAMAP" id="MF_01343_A">
    <property type="entry name" value="Ribosomal_uS15_A"/>
    <property type="match status" value="1"/>
</dbReference>
<dbReference type="InterPro" id="IPR000589">
    <property type="entry name" value="Ribosomal_uS15"/>
</dbReference>
<dbReference type="InterPro" id="IPR023029">
    <property type="entry name" value="Ribosomal_uS15_arc_euk"/>
</dbReference>
<dbReference type="InterPro" id="IPR012606">
    <property type="entry name" value="Ribosomal_uS15_N"/>
</dbReference>
<dbReference type="InterPro" id="IPR009068">
    <property type="entry name" value="uS15_NS1_RNA-bd_sf"/>
</dbReference>
<dbReference type="NCBIfam" id="NF006331">
    <property type="entry name" value="PRK08561.1"/>
    <property type="match status" value="1"/>
</dbReference>
<dbReference type="PANTHER" id="PTHR11885">
    <property type="entry name" value="RIBOSOMAL PROTEIN S15P/S13E"/>
    <property type="match status" value="1"/>
</dbReference>
<dbReference type="PANTHER" id="PTHR11885:SF6">
    <property type="entry name" value="SMALL RIBOSOMAL SUBUNIT PROTEIN US15"/>
    <property type="match status" value="1"/>
</dbReference>
<dbReference type="Pfam" id="PF08069">
    <property type="entry name" value="Ribosomal_S13_N"/>
    <property type="match status" value="1"/>
</dbReference>
<dbReference type="Pfam" id="PF00312">
    <property type="entry name" value="Ribosomal_S15"/>
    <property type="match status" value="1"/>
</dbReference>
<dbReference type="SMART" id="SM01386">
    <property type="entry name" value="Ribosomal_S13_N"/>
    <property type="match status" value="1"/>
</dbReference>
<dbReference type="SMART" id="SM01387">
    <property type="entry name" value="Ribosomal_S15"/>
    <property type="match status" value="1"/>
</dbReference>
<dbReference type="SUPFAM" id="SSF47060">
    <property type="entry name" value="S15/NS1 RNA-binding domain"/>
    <property type="match status" value="1"/>
</dbReference>
<dbReference type="PROSITE" id="PS00362">
    <property type="entry name" value="RIBOSOMAL_S15"/>
    <property type="match status" value="1"/>
</dbReference>
<comment type="function">
    <text evidence="2">Component of the small ribosomal subunit. The ribosome is a large ribonucleoprotein complex responsible for the synthesis of proteins in the cell.</text>
</comment>
<comment type="subunit">
    <text evidence="2">Component of the small ribosomal subunit.</text>
</comment>
<comment type="subcellular location">
    <subcellularLocation>
        <location evidence="2">Cytoplasm</location>
    </subcellularLocation>
</comment>
<comment type="similarity">
    <text evidence="3">Belongs to the universal ribosomal protein uS15 family.</text>
</comment>
<gene>
    <name type="primary">rps13</name>
</gene>
<organism>
    <name type="scientific">Gillichthys mirabilis</name>
    <name type="common">Long-jawed mudsucker</name>
    <dbReference type="NCBI Taxonomy" id="8222"/>
    <lineage>
        <taxon>Eukaryota</taxon>
        <taxon>Metazoa</taxon>
        <taxon>Chordata</taxon>
        <taxon>Craniata</taxon>
        <taxon>Vertebrata</taxon>
        <taxon>Euteleostomi</taxon>
        <taxon>Actinopterygii</taxon>
        <taxon>Neopterygii</taxon>
        <taxon>Teleostei</taxon>
        <taxon>Neoteleostei</taxon>
        <taxon>Acanthomorphata</taxon>
        <taxon>Gobiaria</taxon>
        <taxon>Gobiiformes</taxon>
        <taxon>Gobioidei</taxon>
        <taxon>Gobiidae</taxon>
        <taxon>Gobionellinae</taxon>
        <taxon>Gillichthys</taxon>
    </lineage>
</organism>
<name>RS13_GILMI</name>
<reference key="1">
    <citation type="journal article" date="2001" name="Proc. Natl. Acad. Sci. U.S.A.">
        <title>Hypoxia-induced gene expression profiling in the euryoxic fish Gillichthys mirabilis.</title>
        <authorList>
            <person name="Gracey A.Y."/>
            <person name="Troll J.V."/>
            <person name="Somero G.N."/>
        </authorList>
    </citation>
    <scope>NUCLEOTIDE SEQUENCE [MRNA]</scope>
    <source>
        <tissue>Liver</tissue>
    </source>
</reference>